<accession>B0BBX5</accession>
<comment type="function">
    <text evidence="1">Participates actively in the response to hyperosmotic and heat shock by preventing the aggregation of stress-denatured proteins and by disaggregating proteins, also in an autonomous, DnaK-independent fashion. Unfolded proteins bind initially to DnaJ; upon interaction with the DnaJ-bound protein, DnaK hydrolyzes its bound ATP, resulting in the formation of a stable complex. GrpE releases ADP from DnaK; ATP binding to DnaK triggers the release of the substrate protein, thus completing the reaction cycle. Several rounds of ATP-dependent interactions between DnaJ, DnaK and GrpE are required for fully efficient folding. Also involved, together with DnaK and GrpE, in the DNA replication of plasmids through activation of initiation proteins.</text>
</comment>
<comment type="cofactor">
    <cofactor evidence="1">
        <name>Zn(2+)</name>
        <dbReference type="ChEBI" id="CHEBI:29105"/>
    </cofactor>
    <text evidence="1">Binds 2 Zn(2+) ions per monomer.</text>
</comment>
<comment type="subunit">
    <text evidence="1">Homodimer.</text>
</comment>
<comment type="subcellular location">
    <subcellularLocation>
        <location evidence="1">Cytoplasm</location>
    </subcellularLocation>
</comment>
<comment type="domain">
    <text evidence="1">The J domain is necessary and sufficient to stimulate DnaK ATPase activity. Zinc center 1 plays an important role in the autonomous, DnaK-independent chaperone activity of DnaJ. Zinc center 2 is essential for interaction with DnaK and for DnaJ activity.</text>
</comment>
<comment type="similarity">
    <text evidence="1">Belongs to the DnaJ family.</text>
</comment>
<feature type="chain" id="PRO_1000137672" description="Chaperone protein DnaJ">
    <location>
        <begin position="1"/>
        <end position="392"/>
    </location>
</feature>
<feature type="domain" description="J" evidence="1">
    <location>
        <begin position="2"/>
        <end position="67"/>
    </location>
</feature>
<feature type="repeat" description="CXXCXGXG motif">
    <location>
        <begin position="162"/>
        <end position="169"/>
    </location>
</feature>
<feature type="repeat" description="CXXCXGXG motif">
    <location>
        <begin position="179"/>
        <end position="186"/>
    </location>
</feature>
<feature type="repeat" description="CXXCXGXG motif">
    <location>
        <begin position="201"/>
        <end position="208"/>
    </location>
</feature>
<feature type="repeat" description="CXXCXGXG motif">
    <location>
        <begin position="215"/>
        <end position="222"/>
    </location>
</feature>
<feature type="zinc finger region" description="CR-type" evidence="1">
    <location>
        <begin position="149"/>
        <end position="227"/>
    </location>
</feature>
<feature type="binding site" evidence="1">
    <location>
        <position position="162"/>
    </location>
    <ligand>
        <name>Zn(2+)</name>
        <dbReference type="ChEBI" id="CHEBI:29105"/>
        <label>1</label>
    </ligand>
</feature>
<feature type="binding site" evidence="1">
    <location>
        <position position="165"/>
    </location>
    <ligand>
        <name>Zn(2+)</name>
        <dbReference type="ChEBI" id="CHEBI:29105"/>
        <label>1</label>
    </ligand>
</feature>
<feature type="binding site" evidence="1">
    <location>
        <position position="179"/>
    </location>
    <ligand>
        <name>Zn(2+)</name>
        <dbReference type="ChEBI" id="CHEBI:29105"/>
        <label>2</label>
    </ligand>
</feature>
<feature type="binding site" evidence="1">
    <location>
        <position position="182"/>
    </location>
    <ligand>
        <name>Zn(2+)</name>
        <dbReference type="ChEBI" id="CHEBI:29105"/>
        <label>2</label>
    </ligand>
</feature>
<feature type="binding site" evidence="1">
    <location>
        <position position="201"/>
    </location>
    <ligand>
        <name>Zn(2+)</name>
        <dbReference type="ChEBI" id="CHEBI:29105"/>
        <label>2</label>
    </ligand>
</feature>
<feature type="binding site" evidence="1">
    <location>
        <position position="204"/>
    </location>
    <ligand>
        <name>Zn(2+)</name>
        <dbReference type="ChEBI" id="CHEBI:29105"/>
        <label>2</label>
    </ligand>
</feature>
<feature type="binding site" evidence="1">
    <location>
        <position position="215"/>
    </location>
    <ligand>
        <name>Zn(2+)</name>
        <dbReference type="ChEBI" id="CHEBI:29105"/>
        <label>1</label>
    </ligand>
</feature>
<feature type="binding site" evidence="1">
    <location>
        <position position="218"/>
    </location>
    <ligand>
        <name>Zn(2+)</name>
        <dbReference type="ChEBI" id="CHEBI:29105"/>
        <label>1</label>
    </ligand>
</feature>
<evidence type="ECO:0000255" key="1">
    <source>
        <dbReference type="HAMAP-Rule" id="MF_01152"/>
    </source>
</evidence>
<keyword id="KW-0143">Chaperone</keyword>
<keyword id="KW-0963">Cytoplasm</keyword>
<keyword id="KW-0235">DNA replication</keyword>
<keyword id="KW-0479">Metal-binding</keyword>
<keyword id="KW-0677">Repeat</keyword>
<keyword id="KW-0346">Stress response</keyword>
<keyword id="KW-0862">Zinc</keyword>
<keyword id="KW-0863">Zinc-finger</keyword>
<sequence length="392" mass="41916">MDYYTILGVAKTATPEEIKKAYRKLAVKYHPDKNPGDAEAERRFKEVSEAYEVLGDAQKRESYDRYGKDGPFAGAGGFGGAGMGNMEDALRTFMGAFGGDFGGNGGGFFEGLFGGLGEAFGMRGGSESSRQGASKKVHITLSFEEAAKGVEKELLVSGYKSCDACSGSGANTAKGVKVCDRCKGSGQVVQSRGFFSMASTCPDCSGEGRVITDPCSVCRGQGRIKDKRSVHVNIPAGVDSGMRLKMEGYGDAGQNGAPAGDLYVFIDVEPHPVFERHGDDLVLELPIGFVDAALGIKKEIPTLLKEGTCRLSIPEGIQSGTVLKVRGQGFPNVHGKSRGDLLVRVSVETPQHLSNEQKDLLRQFAATEKAENFPKKRSFLDKIKGFFSDFAV</sequence>
<dbReference type="EMBL" id="AM884177">
    <property type="protein sequence ID" value="CAP06990.1"/>
    <property type="molecule type" value="Genomic_DNA"/>
</dbReference>
<dbReference type="RefSeq" id="WP_009873740.1">
    <property type="nucleotide sequence ID" value="NC_010280.2"/>
</dbReference>
<dbReference type="SMR" id="B0BBX5"/>
<dbReference type="KEGG" id="ctl:CTLon_0593"/>
<dbReference type="HOGENOM" id="CLU_017633_0_7_0"/>
<dbReference type="Proteomes" id="UP001154401">
    <property type="component" value="Chromosome"/>
</dbReference>
<dbReference type="GO" id="GO:0005737">
    <property type="term" value="C:cytoplasm"/>
    <property type="evidence" value="ECO:0007669"/>
    <property type="project" value="UniProtKB-SubCell"/>
</dbReference>
<dbReference type="GO" id="GO:0005524">
    <property type="term" value="F:ATP binding"/>
    <property type="evidence" value="ECO:0007669"/>
    <property type="project" value="InterPro"/>
</dbReference>
<dbReference type="GO" id="GO:0031072">
    <property type="term" value="F:heat shock protein binding"/>
    <property type="evidence" value="ECO:0007669"/>
    <property type="project" value="InterPro"/>
</dbReference>
<dbReference type="GO" id="GO:0051082">
    <property type="term" value="F:unfolded protein binding"/>
    <property type="evidence" value="ECO:0007669"/>
    <property type="project" value="UniProtKB-UniRule"/>
</dbReference>
<dbReference type="GO" id="GO:0008270">
    <property type="term" value="F:zinc ion binding"/>
    <property type="evidence" value="ECO:0007669"/>
    <property type="project" value="UniProtKB-UniRule"/>
</dbReference>
<dbReference type="GO" id="GO:0051085">
    <property type="term" value="P:chaperone cofactor-dependent protein refolding"/>
    <property type="evidence" value="ECO:0007669"/>
    <property type="project" value="TreeGrafter"/>
</dbReference>
<dbReference type="GO" id="GO:0006260">
    <property type="term" value="P:DNA replication"/>
    <property type="evidence" value="ECO:0007669"/>
    <property type="project" value="UniProtKB-KW"/>
</dbReference>
<dbReference type="GO" id="GO:0042026">
    <property type="term" value="P:protein refolding"/>
    <property type="evidence" value="ECO:0007669"/>
    <property type="project" value="TreeGrafter"/>
</dbReference>
<dbReference type="GO" id="GO:0009408">
    <property type="term" value="P:response to heat"/>
    <property type="evidence" value="ECO:0007669"/>
    <property type="project" value="InterPro"/>
</dbReference>
<dbReference type="CDD" id="cd06257">
    <property type="entry name" value="DnaJ"/>
    <property type="match status" value="1"/>
</dbReference>
<dbReference type="CDD" id="cd10747">
    <property type="entry name" value="DnaJ_C"/>
    <property type="match status" value="1"/>
</dbReference>
<dbReference type="CDD" id="cd10719">
    <property type="entry name" value="DnaJ_zf"/>
    <property type="match status" value="1"/>
</dbReference>
<dbReference type="FunFam" id="1.10.287.110:FF:000034">
    <property type="entry name" value="Chaperone protein DnaJ"/>
    <property type="match status" value="1"/>
</dbReference>
<dbReference type="FunFam" id="2.60.260.20:FF:000005">
    <property type="entry name" value="Chaperone protein dnaJ 1, mitochondrial"/>
    <property type="match status" value="1"/>
</dbReference>
<dbReference type="FunFam" id="2.10.230.10:FF:000002">
    <property type="entry name" value="Molecular chaperone DnaJ"/>
    <property type="match status" value="1"/>
</dbReference>
<dbReference type="Gene3D" id="1.10.287.110">
    <property type="entry name" value="DnaJ domain"/>
    <property type="match status" value="1"/>
</dbReference>
<dbReference type="Gene3D" id="2.10.230.10">
    <property type="entry name" value="Heat shock protein DnaJ, cysteine-rich domain"/>
    <property type="match status" value="1"/>
</dbReference>
<dbReference type="Gene3D" id="2.60.260.20">
    <property type="entry name" value="Urease metallochaperone UreE, N-terminal domain"/>
    <property type="match status" value="2"/>
</dbReference>
<dbReference type="HAMAP" id="MF_01152">
    <property type="entry name" value="DnaJ"/>
    <property type="match status" value="1"/>
</dbReference>
<dbReference type="InterPro" id="IPR012724">
    <property type="entry name" value="DnaJ"/>
</dbReference>
<dbReference type="InterPro" id="IPR002939">
    <property type="entry name" value="DnaJ_C"/>
</dbReference>
<dbReference type="InterPro" id="IPR001623">
    <property type="entry name" value="DnaJ_domain"/>
</dbReference>
<dbReference type="InterPro" id="IPR018253">
    <property type="entry name" value="DnaJ_domain_CS"/>
</dbReference>
<dbReference type="InterPro" id="IPR008971">
    <property type="entry name" value="HSP40/DnaJ_pept-bd"/>
</dbReference>
<dbReference type="InterPro" id="IPR001305">
    <property type="entry name" value="HSP_DnaJ_Cys-rich_dom"/>
</dbReference>
<dbReference type="InterPro" id="IPR036410">
    <property type="entry name" value="HSP_DnaJ_Cys-rich_dom_sf"/>
</dbReference>
<dbReference type="InterPro" id="IPR036869">
    <property type="entry name" value="J_dom_sf"/>
</dbReference>
<dbReference type="NCBIfam" id="TIGR02349">
    <property type="entry name" value="DnaJ_bact"/>
    <property type="match status" value="1"/>
</dbReference>
<dbReference type="NCBIfam" id="NF008035">
    <property type="entry name" value="PRK10767.1"/>
    <property type="match status" value="1"/>
</dbReference>
<dbReference type="NCBIfam" id="NF010877">
    <property type="entry name" value="PRK14284.1"/>
    <property type="match status" value="1"/>
</dbReference>
<dbReference type="PANTHER" id="PTHR43096:SF48">
    <property type="entry name" value="CHAPERONE PROTEIN DNAJ"/>
    <property type="match status" value="1"/>
</dbReference>
<dbReference type="PANTHER" id="PTHR43096">
    <property type="entry name" value="DNAJ HOMOLOG 1, MITOCHONDRIAL-RELATED"/>
    <property type="match status" value="1"/>
</dbReference>
<dbReference type="Pfam" id="PF00226">
    <property type="entry name" value="DnaJ"/>
    <property type="match status" value="1"/>
</dbReference>
<dbReference type="Pfam" id="PF01556">
    <property type="entry name" value="DnaJ_C"/>
    <property type="match status" value="1"/>
</dbReference>
<dbReference type="Pfam" id="PF00684">
    <property type="entry name" value="DnaJ_CXXCXGXG"/>
    <property type="match status" value="1"/>
</dbReference>
<dbReference type="PRINTS" id="PR00625">
    <property type="entry name" value="JDOMAIN"/>
</dbReference>
<dbReference type="SMART" id="SM00271">
    <property type="entry name" value="DnaJ"/>
    <property type="match status" value="1"/>
</dbReference>
<dbReference type="SUPFAM" id="SSF46565">
    <property type="entry name" value="Chaperone J-domain"/>
    <property type="match status" value="1"/>
</dbReference>
<dbReference type="SUPFAM" id="SSF57938">
    <property type="entry name" value="DnaJ/Hsp40 cysteine-rich domain"/>
    <property type="match status" value="1"/>
</dbReference>
<dbReference type="SUPFAM" id="SSF49493">
    <property type="entry name" value="HSP40/DnaJ peptide-binding domain"/>
    <property type="match status" value="2"/>
</dbReference>
<dbReference type="PROSITE" id="PS00636">
    <property type="entry name" value="DNAJ_1"/>
    <property type="match status" value="1"/>
</dbReference>
<dbReference type="PROSITE" id="PS50076">
    <property type="entry name" value="DNAJ_2"/>
    <property type="match status" value="1"/>
</dbReference>
<dbReference type="PROSITE" id="PS51188">
    <property type="entry name" value="ZF_CR"/>
    <property type="match status" value="1"/>
</dbReference>
<reference key="1">
    <citation type="journal article" date="2008" name="Genome Res.">
        <title>Chlamydia trachomatis: genome sequence analysis of lymphogranuloma venereum isolates.</title>
        <authorList>
            <person name="Thomson N.R."/>
            <person name="Holden M.T.G."/>
            <person name="Carder C."/>
            <person name="Lennard N."/>
            <person name="Lockey S.J."/>
            <person name="Marsh P."/>
            <person name="Skipp P."/>
            <person name="O'Connor C.D."/>
            <person name="Goodhead I."/>
            <person name="Norbertzcak H."/>
            <person name="Harris B."/>
            <person name="Ormond D."/>
            <person name="Rance R."/>
            <person name="Quail M.A."/>
            <person name="Parkhill J."/>
            <person name="Stephens R.S."/>
            <person name="Clarke I.N."/>
        </authorList>
    </citation>
    <scope>NUCLEOTIDE SEQUENCE [LARGE SCALE GENOMIC DNA]</scope>
    <source>
        <strain>UCH-1/proctitis</strain>
    </source>
</reference>
<name>DNAJ_CHLTB</name>
<gene>
    <name evidence="1" type="primary">dnaJ</name>
    <name type="ordered locus">CTLon_0593</name>
</gene>
<proteinExistence type="inferred from homology"/>
<protein>
    <recommendedName>
        <fullName evidence="1">Chaperone protein DnaJ</fullName>
    </recommendedName>
</protein>
<organism>
    <name type="scientific">Chlamydia trachomatis serovar L2b (strain UCH-1/proctitis)</name>
    <dbReference type="NCBI Taxonomy" id="471473"/>
    <lineage>
        <taxon>Bacteria</taxon>
        <taxon>Pseudomonadati</taxon>
        <taxon>Chlamydiota</taxon>
        <taxon>Chlamydiia</taxon>
        <taxon>Chlamydiales</taxon>
        <taxon>Chlamydiaceae</taxon>
        <taxon>Chlamydia/Chlamydophila group</taxon>
        <taxon>Chlamydia</taxon>
    </lineage>
</organism>